<proteinExistence type="inferred from homology"/>
<gene>
    <name evidence="1" type="primary">thrS</name>
    <name type="ordered locus">Desal_1349</name>
</gene>
<protein>
    <recommendedName>
        <fullName evidence="1">Threonine--tRNA ligase</fullName>
        <ecNumber evidence="1">6.1.1.3</ecNumber>
    </recommendedName>
    <alternativeName>
        <fullName evidence="1">Threonyl-tRNA synthetase</fullName>
        <shortName evidence="1">ThrRS</shortName>
    </alternativeName>
</protein>
<keyword id="KW-0030">Aminoacyl-tRNA synthetase</keyword>
<keyword id="KW-0067">ATP-binding</keyword>
<keyword id="KW-0963">Cytoplasm</keyword>
<keyword id="KW-0436">Ligase</keyword>
<keyword id="KW-0479">Metal-binding</keyword>
<keyword id="KW-0547">Nucleotide-binding</keyword>
<keyword id="KW-0648">Protein biosynthesis</keyword>
<keyword id="KW-1185">Reference proteome</keyword>
<keyword id="KW-0694">RNA-binding</keyword>
<keyword id="KW-0820">tRNA-binding</keyword>
<keyword id="KW-0862">Zinc</keyword>
<sequence length="642" mass="72673">MQVAGKELEVQQGALCGEVLKEALSKKQFKNVVVAKCGDTLLDLTTTVPADCTDLEPVMADSKEGLEVIRHSTAHLMAEAVKKLFPTAKVTIGPSIASGFYYDFDYERPFTPEDLEAIEAEMLRRVGANEEFTREVLSSADALKKFEEMGEDYKIELINDLGEETVSVYTNGEFADLCRGPHVARTGMLKAFKLLSVAGAYWRGDENRQQLQRIYGTAFPDPKALKKHLAQIEEAKKRDHRKLGTQLDLFSVNPEVGAGMTIWHPKGALIRAILEDFERKEHLKRGYQFVQGPLILKRELWEKSGHYDNYRENMYFTEIDEQSYGIKPMNCLSHMLVFKSRLRSYRDLPQRYFEHGVVHRHEKSGVLHGLLRVRTFTQDDAHLICRPDQLRDEIIGVAKFVGDVMGLFGFEYEAEVSTKPEKAIGSDEDWDRATEALEGALKEMGMEYSINEGDGAFYGPKIDIIIKDALERRWQCATIQCDFTLPERFDLSYVGEDGERHRPVMLHRVILGSIERFIGVLLEHTGGALPAWLSPVQAKILTVTDSQNEFAQKVLQFLREKGIRAEVDDRNEKLGYKVREAQLEKIPYMLVIGDKEVAAESVNVRARDGEDPGLKSLEEAAELISTAIDEPFKRGGMSYSFS</sequence>
<evidence type="ECO:0000255" key="1">
    <source>
        <dbReference type="HAMAP-Rule" id="MF_00184"/>
    </source>
</evidence>
<evidence type="ECO:0000255" key="2">
    <source>
        <dbReference type="PROSITE-ProRule" id="PRU01228"/>
    </source>
</evidence>
<name>SYT_MARSD</name>
<accession>C6BRH1</accession>
<organism>
    <name type="scientific">Maridesulfovibrio salexigens (strain ATCC 14822 / DSM 2638 / NCIMB 8403 / VKM B-1763)</name>
    <name type="common">Desulfovibrio salexigens</name>
    <dbReference type="NCBI Taxonomy" id="526222"/>
    <lineage>
        <taxon>Bacteria</taxon>
        <taxon>Pseudomonadati</taxon>
        <taxon>Thermodesulfobacteriota</taxon>
        <taxon>Desulfovibrionia</taxon>
        <taxon>Desulfovibrionales</taxon>
        <taxon>Desulfovibrionaceae</taxon>
        <taxon>Maridesulfovibrio</taxon>
    </lineage>
</organism>
<reference key="1">
    <citation type="submission" date="2009-06" db="EMBL/GenBank/DDBJ databases">
        <title>Complete sequence of Desulfovibrio salexigens DSM 2638.</title>
        <authorList>
            <consortium name="US DOE Joint Genome Institute"/>
            <person name="Lucas S."/>
            <person name="Copeland A."/>
            <person name="Lapidus A."/>
            <person name="Glavina del Rio T."/>
            <person name="Tice H."/>
            <person name="Bruce D."/>
            <person name="Goodwin L."/>
            <person name="Pitluck S."/>
            <person name="Munk A.C."/>
            <person name="Brettin T."/>
            <person name="Detter J.C."/>
            <person name="Han C."/>
            <person name="Tapia R."/>
            <person name="Larimer F."/>
            <person name="Land M."/>
            <person name="Hauser L."/>
            <person name="Kyrpides N."/>
            <person name="Anderson I."/>
            <person name="Wall J.D."/>
            <person name="Arkin A.P."/>
            <person name="Dehal P."/>
            <person name="Chivian D."/>
            <person name="Giles B."/>
            <person name="Hazen T.C."/>
        </authorList>
    </citation>
    <scope>NUCLEOTIDE SEQUENCE [LARGE SCALE GENOMIC DNA]</scope>
    <source>
        <strain>ATCC 14822 / DSM 2638 / NCIMB 8403 / VKM B-1763</strain>
    </source>
</reference>
<comment type="function">
    <text evidence="1">Catalyzes the attachment of threonine to tRNA(Thr) in a two-step reaction: L-threonine is first activated by ATP to form Thr-AMP and then transferred to the acceptor end of tRNA(Thr). Also edits incorrectly charged L-seryl-tRNA(Thr).</text>
</comment>
<comment type="catalytic activity">
    <reaction evidence="1">
        <text>tRNA(Thr) + L-threonine + ATP = L-threonyl-tRNA(Thr) + AMP + diphosphate + H(+)</text>
        <dbReference type="Rhea" id="RHEA:24624"/>
        <dbReference type="Rhea" id="RHEA-COMP:9670"/>
        <dbReference type="Rhea" id="RHEA-COMP:9704"/>
        <dbReference type="ChEBI" id="CHEBI:15378"/>
        <dbReference type="ChEBI" id="CHEBI:30616"/>
        <dbReference type="ChEBI" id="CHEBI:33019"/>
        <dbReference type="ChEBI" id="CHEBI:57926"/>
        <dbReference type="ChEBI" id="CHEBI:78442"/>
        <dbReference type="ChEBI" id="CHEBI:78534"/>
        <dbReference type="ChEBI" id="CHEBI:456215"/>
        <dbReference type="EC" id="6.1.1.3"/>
    </reaction>
</comment>
<comment type="cofactor">
    <cofactor evidence="1">
        <name>Zn(2+)</name>
        <dbReference type="ChEBI" id="CHEBI:29105"/>
    </cofactor>
    <text evidence="1">Binds 1 zinc ion per subunit.</text>
</comment>
<comment type="subunit">
    <text evidence="1">Homodimer.</text>
</comment>
<comment type="subcellular location">
    <subcellularLocation>
        <location evidence="1">Cytoplasm</location>
    </subcellularLocation>
</comment>
<comment type="similarity">
    <text evidence="1">Belongs to the class-II aminoacyl-tRNA synthetase family.</text>
</comment>
<dbReference type="EC" id="6.1.1.3" evidence="1"/>
<dbReference type="EMBL" id="CP001649">
    <property type="protein sequence ID" value="ACS79411.1"/>
    <property type="molecule type" value="Genomic_DNA"/>
</dbReference>
<dbReference type="RefSeq" id="WP_015851229.1">
    <property type="nucleotide sequence ID" value="NC_012881.1"/>
</dbReference>
<dbReference type="SMR" id="C6BRH1"/>
<dbReference type="STRING" id="526222.Desal_1349"/>
<dbReference type="KEGG" id="dsa:Desal_1349"/>
<dbReference type="eggNOG" id="COG0441">
    <property type="taxonomic scope" value="Bacteria"/>
</dbReference>
<dbReference type="HOGENOM" id="CLU_008554_0_1_7"/>
<dbReference type="OrthoDB" id="9802304at2"/>
<dbReference type="Proteomes" id="UP000002601">
    <property type="component" value="Chromosome"/>
</dbReference>
<dbReference type="GO" id="GO:0005829">
    <property type="term" value="C:cytosol"/>
    <property type="evidence" value="ECO:0007669"/>
    <property type="project" value="TreeGrafter"/>
</dbReference>
<dbReference type="GO" id="GO:0005524">
    <property type="term" value="F:ATP binding"/>
    <property type="evidence" value="ECO:0007669"/>
    <property type="project" value="UniProtKB-UniRule"/>
</dbReference>
<dbReference type="GO" id="GO:0046872">
    <property type="term" value="F:metal ion binding"/>
    <property type="evidence" value="ECO:0007669"/>
    <property type="project" value="UniProtKB-KW"/>
</dbReference>
<dbReference type="GO" id="GO:0004829">
    <property type="term" value="F:threonine-tRNA ligase activity"/>
    <property type="evidence" value="ECO:0007669"/>
    <property type="project" value="UniProtKB-UniRule"/>
</dbReference>
<dbReference type="GO" id="GO:0000049">
    <property type="term" value="F:tRNA binding"/>
    <property type="evidence" value="ECO:0007669"/>
    <property type="project" value="UniProtKB-KW"/>
</dbReference>
<dbReference type="GO" id="GO:0006435">
    <property type="term" value="P:threonyl-tRNA aminoacylation"/>
    <property type="evidence" value="ECO:0007669"/>
    <property type="project" value="UniProtKB-UniRule"/>
</dbReference>
<dbReference type="CDD" id="cd00860">
    <property type="entry name" value="ThrRS_anticodon"/>
    <property type="match status" value="1"/>
</dbReference>
<dbReference type="CDD" id="cd00771">
    <property type="entry name" value="ThrRS_core"/>
    <property type="match status" value="1"/>
</dbReference>
<dbReference type="FunFam" id="3.30.54.20:FF:000002">
    <property type="entry name" value="Threonine--tRNA ligase"/>
    <property type="match status" value="1"/>
</dbReference>
<dbReference type="FunFam" id="3.30.930.10:FF:000002">
    <property type="entry name" value="Threonine--tRNA ligase"/>
    <property type="match status" value="1"/>
</dbReference>
<dbReference type="FunFam" id="3.40.50.800:FF:000001">
    <property type="entry name" value="Threonine--tRNA ligase"/>
    <property type="match status" value="1"/>
</dbReference>
<dbReference type="FunFam" id="3.30.980.10:FF:000005">
    <property type="entry name" value="Threonyl-tRNA synthetase, mitochondrial"/>
    <property type="match status" value="1"/>
</dbReference>
<dbReference type="Gene3D" id="3.30.54.20">
    <property type="match status" value="1"/>
</dbReference>
<dbReference type="Gene3D" id="3.40.50.800">
    <property type="entry name" value="Anticodon-binding domain"/>
    <property type="match status" value="1"/>
</dbReference>
<dbReference type="Gene3D" id="3.30.930.10">
    <property type="entry name" value="Bira Bifunctional Protein, Domain 2"/>
    <property type="match status" value="1"/>
</dbReference>
<dbReference type="Gene3D" id="3.30.980.10">
    <property type="entry name" value="Threonyl-trna Synthetase, Chain A, domain 2"/>
    <property type="match status" value="1"/>
</dbReference>
<dbReference type="HAMAP" id="MF_00184">
    <property type="entry name" value="Thr_tRNA_synth"/>
    <property type="match status" value="1"/>
</dbReference>
<dbReference type="InterPro" id="IPR002314">
    <property type="entry name" value="aa-tRNA-synt_IIb"/>
</dbReference>
<dbReference type="InterPro" id="IPR006195">
    <property type="entry name" value="aa-tRNA-synth_II"/>
</dbReference>
<dbReference type="InterPro" id="IPR045864">
    <property type="entry name" value="aa-tRNA-synth_II/BPL/LPL"/>
</dbReference>
<dbReference type="InterPro" id="IPR004154">
    <property type="entry name" value="Anticodon-bd"/>
</dbReference>
<dbReference type="InterPro" id="IPR036621">
    <property type="entry name" value="Anticodon-bd_dom_sf"/>
</dbReference>
<dbReference type="InterPro" id="IPR004095">
    <property type="entry name" value="TGS"/>
</dbReference>
<dbReference type="InterPro" id="IPR002320">
    <property type="entry name" value="Thr-tRNA-ligase_IIa"/>
</dbReference>
<dbReference type="InterPro" id="IPR018163">
    <property type="entry name" value="Thr/Ala-tRNA-synth_IIc_edit"/>
</dbReference>
<dbReference type="InterPro" id="IPR047246">
    <property type="entry name" value="ThrRS_anticodon"/>
</dbReference>
<dbReference type="InterPro" id="IPR033728">
    <property type="entry name" value="ThrRS_core"/>
</dbReference>
<dbReference type="InterPro" id="IPR012947">
    <property type="entry name" value="tRNA_SAD"/>
</dbReference>
<dbReference type="NCBIfam" id="TIGR00418">
    <property type="entry name" value="thrS"/>
    <property type="match status" value="1"/>
</dbReference>
<dbReference type="PANTHER" id="PTHR11451:SF44">
    <property type="entry name" value="THREONINE--TRNA LIGASE, CHLOROPLASTIC_MITOCHONDRIAL 2"/>
    <property type="match status" value="1"/>
</dbReference>
<dbReference type="PANTHER" id="PTHR11451">
    <property type="entry name" value="THREONINE-TRNA LIGASE"/>
    <property type="match status" value="1"/>
</dbReference>
<dbReference type="Pfam" id="PF03129">
    <property type="entry name" value="HGTP_anticodon"/>
    <property type="match status" value="1"/>
</dbReference>
<dbReference type="Pfam" id="PF00587">
    <property type="entry name" value="tRNA-synt_2b"/>
    <property type="match status" value="1"/>
</dbReference>
<dbReference type="Pfam" id="PF07973">
    <property type="entry name" value="tRNA_SAD"/>
    <property type="match status" value="1"/>
</dbReference>
<dbReference type="PRINTS" id="PR01047">
    <property type="entry name" value="TRNASYNTHTHR"/>
</dbReference>
<dbReference type="SMART" id="SM00863">
    <property type="entry name" value="tRNA_SAD"/>
    <property type="match status" value="1"/>
</dbReference>
<dbReference type="SUPFAM" id="SSF52954">
    <property type="entry name" value="Class II aaRS ABD-related"/>
    <property type="match status" value="1"/>
</dbReference>
<dbReference type="SUPFAM" id="SSF55681">
    <property type="entry name" value="Class II aaRS and biotin synthetases"/>
    <property type="match status" value="1"/>
</dbReference>
<dbReference type="SUPFAM" id="SSF55186">
    <property type="entry name" value="ThrRS/AlaRS common domain"/>
    <property type="match status" value="1"/>
</dbReference>
<dbReference type="PROSITE" id="PS50862">
    <property type="entry name" value="AA_TRNA_LIGASE_II"/>
    <property type="match status" value="1"/>
</dbReference>
<dbReference type="PROSITE" id="PS51880">
    <property type="entry name" value="TGS"/>
    <property type="match status" value="1"/>
</dbReference>
<feature type="chain" id="PRO_1000203900" description="Threonine--tRNA ligase">
    <location>
        <begin position="1"/>
        <end position="642"/>
    </location>
</feature>
<feature type="domain" description="TGS" evidence="2">
    <location>
        <begin position="1"/>
        <end position="58"/>
    </location>
</feature>
<feature type="region of interest" description="Catalytic" evidence="1">
    <location>
        <begin position="239"/>
        <end position="530"/>
    </location>
</feature>
<feature type="binding site" evidence="1">
    <location>
        <position position="331"/>
    </location>
    <ligand>
        <name>Zn(2+)</name>
        <dbReference type="ChEBI" id="CHEBI:29105"/>
    </ligand>
</feature>
<feature type="binding site" evidence="1">
    <location>
        <position position="382"/>
    </location>
    <ligand>
        <name>Zn(2+)</name>
        <dbReference type="ChEBI" id="CHEBI:29105"/>
    </ligand>
</feature>
<feature type="binding site" evidence="1">
    <location>
        <position position="507"/>
    </location>
    <ligand>
        <name>Zn(2+)</name>
        <dbReference type="ChEBI" id="CHEBI:29105"/>
    </ligand>
</feature>